<accession>P52822</accession>
<accession>O14153</accession>
<gene>
    <name type="primary">rpl501</name>
    <name type="synonym">rpl5a</name>
    <name type="ORF">SPAC3H5.12c</name>
</gene>
<evidence type="ECO:0000250" key="1">
    <source>
        <dbReference type="UniProtKB" id="P26321"/>
    </source>
</evidence>
<evidence type="ECO:0000269" key="2">
    <source>
    </source>
</evidence>
<evidence type="ECO:0000305" key="3"/>
<dbReference type="EMBL" id="U48270">
    <property type="protein sequence ID" value="AAB05674.1"/>
    <property type="molecule type" value="Genomic_DNA"/>
</dbReference>
<dbReference type="EMBL" id="CU329670">
    <property type="protein sequence ID" value="CAB16596.1"/>
    <property type="molecule type" value="Genomic_DNA"/>
</dbReference>
<dbReference type="PIR" id="T38758">
    <property type="entry name" value="T38758"/>
</dbReference>
<dbReference type="RefSeq" id="NP_594180.1">
    <property type="nucleotide sequence ID" value="NM_001019604.2"/>
</dbReference>
<dbReference type="PDB" id="8EUG">
    <property type="method" value="EM"/>
    <property type="resolution" value="2.80 A"/>
    <property type="chains" value="D=1-294"/>
</dbReference>
<dbReference type="PDB" id="8EUI">
    <property type="method" value="EM"/>
    <property type="resolution" value="3.10 A"/>
    <property type="chains" value="D=1-294"/>
</dbReference>
<dbReference type="PDBsum" id="8EUG"/>
<dbReference type="PDBsum" id="8EUI"/>
<dbReference type="SMR" id="P52822"/>
<dbReference type="BioGRID" id="280056">
    <property type="interactions" value="4"/>
</dbReference>
<dbReference type="FunCoup" id="P52822">
    <property type="interactions" value="572"/>
</dbReference>
<dbReference type="IntAct" id="P52822">
    <property type="interactions" value="1"/>
</dbReference>
<dbReference type="MINT" id="P52822"/>
<dbReference type="STRING" id="284812.P52822"/>
<dbReference type="iPTMnet" id="P52822"/>
<dbReference type="PaxDb" id="4896-SPAC3H5.12c.1"/>
<dbReference type="EnsemblFungi" id="SPAC3H5.12c.1">
    <property type="protein sequence ID" value="SPAC3H5.12c.1:pep"/>
    <property type="gene ID" value="SPAC3H5.12c"/>
</dbReference>
<dbReference type="GeneID" id="2543642"/>
<dbReference type="KEGG" id="spo:2543642"/>
<dbReference type="PomBase" id="SPAC3H5.12c">
    <property type="gene designation" value="rpl501"/>
</dbReference>
<dbReference type="VEuPathDB" id="FungiDB:SPAC3H5.12c"/>
<dbReference type="eggNOG" id="KOG0875">
    <property type="taxonomic scope" value="Eukaryota"/>
</dbReference>
<dbReference type="HOGENOM" id="CLU_056222_1_0_1"/>
<dbReference type="InParanoid" id="P52822"/>
<dbReference type="OMA" id="MAHGPRY"/>
<dbReference type="PhylomeDB" id="P52822"/>
<dbReference type="PRO" id="PR:P52822"/>
<dbReference type="Proteomes" id="UP000002485">
    <property type="component" value="Chromosome I"/>
</dbReference>
<dbReference type="GO" id="GO:0022625">
    <property type="term" value="C:cytosolic large ribosomal subunit"/>
    <property type="evidence" value="ECO:0000318"/>
    <property type="project" value="GO_Central"/>
</dbReference>
<dbReference type="GO" id="GO:0005634">
    <property type="term" value="C:nucleus"/>
    <property type="evidence" value="ECO:0007669"/>
    <property type="project" value="UniProtKB-SubCell"/>
</dbReference>
<dbReference type="GO" id="GO:0008097">
    <property type="term" value="F:5S rRNA binding"/>
    <property type="evidence" value="ECO:0000318"/>
    <property type="project" value="GO_Central"/>
</dbReference>
<dbReference type="GO" id="GO:0003735">
    <property type="term" value="F:structural constituent of ribosome"/>
    <property type="evidence" value="ECO:0000318"/>
    <property type="project" value="GO_Central"/>
</dbReference>
<dbReference type="GO" id="GO:0002181">
    <property type="term" value="P:cytoplasmic translation"/>
    <property type="evidence" value="ECO:0000266"/>
    <property type="project" value="PomBase"/>
</dbReference>
<dbReference type="GO" id="GO:0000027">
    <property type="term" value="P:ribosomal large subunit assembly"/>
    <property type="evidence" value="ECO:0000318"/>
    <property type="project" value="GO_Central"/>
</dbReference>
<dbReference type="CDD" id="cd00432">
    <property type="entry name" value="Ribosomal_L18_L5e"/>
    <property type="match status" value="1"/>
</dbReference>
<dbReference type="FunFam" id="3.30.420.100:FF:000002">
    <property type="entry name" value="60S ribosomal protein L5"/>
    <property type="match status" value="1"/>
</dbReference>
<dbReference type="Gene3D" id="3.30.420.100">
    <property type="match status" value="1"/>
</dbReference>
<dbReference type="HAMAP" id="MF_01337_A">
    <property type="entry name" value="Ribosomal_uL18_A"/>
    <property type="match status" value="1"/>
</dbReference>
<dbReference type="InterPro" id="IPR005485">
    <property type="entry name" value="Rbsml_uL18_euk"/>
</dbReference>
<dbReference type="InterPro" id="IPR025607">
    <property type="entry name" value="Ribosomal_uL18_C_euk"/>
</dbReference>
<dbReference type="PANTHER" id="PTHR23410:SF12">
    <property type="entry name" value="LARGE RIBOSOMAL SUBUNIT PROTEIN UL18"/>
    <property type="match status" value="1"/>
</dbReference>
<dbReference type="PANTHER" id="PTHR23410">
    <property type="entry name" value="RIBOSOMAL PROTEIN L5-RELATED"/>
    <property type="match status" value="1"/>
</dbReference>
<dbReference type="Pfam" id="PF14204">
    <property type="entry name" value="Ribosomal_L18_c"/>
    <property type="match status" value="1"/>
</dbReference>
<dbReference type="Pfam" id="PF17144">
    <property type="entry name" value="Ribosomal_L5e"/>
    <property type="match status" value="1"/>
</dbReference>
<dbReference type="PRINTS" id="PR00058">
    <property type="entry name" value="RIBOSOMALL5"/>
</dbReference>
<dbReference type="SUPFAM" id="SSF53137">
    <property type="entry name" value="Translational machinery components"/>
    <property type="match status" value="1"/>
</dbReference>
<reference key="1">
    <citation type="journal article" date="1996" name="J. Biol. Chem.">
        <title>Distinct domains in ribosomal protein L5 mediate 5 S rRNA binding and nucleolar localization.</title>
        <authorList>
            <person name="Michael W.M."/>
            <person name="Dreyfuss G."/>
        </authorList>
    </citation>
    <scope>NUCLEOTIDE SEQUENCE [GENOMIC DNA]</scope>
</reference>
<reference key="2">
    <citation type="journal article" date="2002" name="Nature">
        <title>The genome sequence of Schizosaccharomyces pombe.</title>
        <authorList>
            <person name="Wood V."/>
            <person name="Gwilliam R."/>
            <person name="Rajandream M.A."/>
            <person name="Lyne M.H."/>
            <person name="Lyne R."/>
            <person name="Stewart A."/>
            <person name="Sgouros J.G."/>
            <person name="Peat N."/>
            <person name="Hayles J."/>
            <person name="Baker S.G."/>
            <person name="Basham D."/>
            <person name="Bowman S."/>
            <person name="Brooks K."/>
            <person name="Brown D."/>
            <person name="Brown S."/>
            <person name="Chillingworth T."/>
            <person name="Churcher C.M."/>
            <person name="Collins M."/>
            <person name="Connor R."/>
            <person name="Cronin A."/>
            <person name="Davis P."/>
            <person name="Feltwell T."/>
            <person name="Fraser A."/>
            <person name="Gentles S."/>
            <person name="Goble A."/>
            <person name="Hamlin N."/>
            <person name="Harris D.E."/>
            <person name="Hidalgo J."/>
            <person name="Hodgson G."/>
            <person name="Holroyd S."/>
            <person name="Hornsby T."/>
            <person name="Howarth S."/>
            <person name="Huckle E.J."/>
            <person name="Hunt S."/>
            <person name="Jagels K."/>
            <person name="James K.D."/>
            <person name="Jones L."/>
            <person name="Jones M."/>
            <person name="Leather S."/>
            <person name="McDonald S."/>
            <person name="McLean J."/>
            <person name="Mooney P."/>
            <person name="Moule S."/>
            <person name="Mungall K.L."/>
            <person name="Murphy L.D."/>
            <person name="Niblett D."/>
            <person name="Odell C."/>
            <person name="Oliver K."/>
            <person name="O'Neil S."/>
            <person name="Pearson D."/>
            <person name="Quail M.A."/>
            <person name="Rabbinowitsch E."/>
            <person name="Rutherford K.M."/>
            <person name="Rutter S."/>
            <person name="Saunders D."/>
            <person name="Seeger K."/>
            <person name="Sharp S."/>
            <person name="Skelton J."/>
            <person name="Simmonds M.N."/>
            <person name="Squares R."/>
            <person name="Squares S."/>
            <person name="Stevens K."/>
            <person name="Taylor K."/>
            <person name="Taylor R.G."/>
            <person name="Tivey A."/>
            <person name="Walsh S.V."/>
            <person name="Warren T."/>
            <person name="Whitehead S."/>
            <person name="Woodward J.R."/>
            <person name="Volckaert G."/>
            <person name="Aert R."/>
            <person name="Robben J."/>
            <person name="Grymonprez B."/>
            <person name="Weltjens I."/>
            <person name="Vanstreels E."/>
            <person name="Rieger M."/>
            <person name="Schaefer M."/>
            <person name="Mueller-Auer S."/>
            <person name="Gabel C."/>
            <person name="Fuchs M."/>
            <person name="Duesterhoeft A."/>
            <person name="Fritzc C."/>
            <person name="Holzer E."/>
            <person name="Moestl D."/>
            <person name="Hilbert H."/>
            <person name="Borzym K."/>
            <person name="Langer I."/>
            <person name="Beck A."/>
            <person name="Lehrach H."/>
            <person name="Reinhardt R."/>
            <person name="Pohl T.M."/>
            <person name="Eger P."/>
            <person name="Zimmermann W."/>
            <person name="Wedler H."/>
            <person name="Wambutt R."/>
            <person name="Purnelle B."/>
            <person name="Goffeau A."/>
            <person name="Cadieu E."/>
            <person name="Dreano S."/>
            <person name="Gloux S."/>
            <person name="Lelaure V."/>
            <person name="Mottier S."/>
            <person name="Galibert F."/>
            <person name="Aves S.J."/>
            <person name="Xiang Z."/>
            <person name="Hunt C."/>
            <person name="Moore K."/>
            <person name="Hurst S.M."/>
            <person name="Lucas M."/>
            <person name="Rochet M."/>
            <person name="Gaillardin C."/>
            <person name="Tallada V.A."/>
            <person name="Garzon A."/>
            <person name="Thode G."/>
            <person name="Daga R.R."/>
            <person name="Cruzado L."/>
            <person name="Jimenez J."/>
            <person name="Sanchez M."/>
            <person name="del Rey F."/>
            <person name="Benito J."/>
            <person name="Dominguez A."/>
            <person name="Revuelta J.L."/>
            <person name="Moreno S."/>
            <person name="Armstrong J."/>
            <person name="Forsburg S.L."/>
            <person name="Cerutti L."/>
            <person name="Lowe T."/>
            <person name="McCombie W.R."/>
            <person name="Paulsen I."/>
            <person name="Potashkin J."/>
            <person name="Shpakovski G.V."/>
            <person name="Ussery D."/>
            <person name="Barrell B.G."/>
            <person name="Nurse P."/>
        </authorList>
    </citation>
    <scope>NUCLEOTIDE SEQUENCE [LARGE SCALE GENOMIC DNA]</scope>
    <source>
        <strain>972 / ATCC 24843</strain>
    </source>
</reference>
<reference key="3">
    <citation type="journal article" date="2008" name="J. Proteome Res.">
        <title>Phosphoproteome analysis of fission yeast.</title>
        <authorList>
            <person name="Wilson-Grady J.T."/>
            <person name="Villen J."/>
            <person name="Gygi S.P."/>
        </authorList>
    </citation>
    <scope>PHOSPHORYLATION [LARGE SCALE ANALYSIS] AT SER-10; TYR-12 AND SER-81</scope>
    <scope>IDENTIFICATION BY MASS SPECTROMETRY</scope>
</reference>
<keyword id="KW-0002">3D-structure</keyword>
<keyword id="KW-0963">Cytoplasm</keyword>
<keyword id="KW-0539">Nucleus</keyword>
<keyword id="KW-0597">Phosphoprotein</keyword>
<keyword id="KW-1185">Reference proteome</keyword>
<keyword id="KW-0687">Ribonucleoprotein</keyword>
<keyword id="KW-0689">Ribosomal protein</keyword>
<keyword id="KW-0694">RNA-binding</keyword>
<keyword id="KW-0699">rRNA-binding</keyword>
<proteinExistence type="evidence at protein level"/>
<feature type="chain" id="PRO_0000131452" description="Large ribosomal subunit protein uL18A">
    <location>
        <begin position="1"/>
        <end position="294"/>
    </location>
</feature>
<feature type="modified residue" description="Phosphoserine" evidence="2">
    <location>
        <position position="10"/>
    </location>
</feature>
<feature type="modified residue" description="Phosphotyrosine" evidence="2">
    <location>
        <position position="12"/>
    </location>
</feature>
<feature type="modified residue" description="Phosphoserine" evidence="2">
    <location>
        <position position="81"/>
    </location>
</feature>
<feature type="sequence conflict" description="In Ref. 1; AAB05674." evidence="3" ref="1">
    <location>
        <position position="24"/>
    </location>
</feature>
<feature type="sequence conflict" description="In Ref. 1; AAB05674." evidence="3" ref="1">
    <original>T</original>
    <variation>I</variation>
    <location>
        <position position="28"/>
    </location>
</feature>
<feature type="sequence conflict" description="In Ref. 1; AAB05674." evidence="3" ref="1">
    <original>F</original>
    <variation>S</variation>
    <location>
        <position position="223"/>
    </location>
</feature>
<name>RL5A_SCHPO</name>
<protein>
    <recommendedName>
        <fullName evidence="3">Large ribosomal subunit protein uL18A</fullName>
    </recommendedName>
    <alternativeName>
        <fullName>60S ribosomal protein L5-A</fullName>
    </alternativeName>
</protein>
<comment type="function">
    <text evidence="1">Component of the ribosome, a large ribonucleoprotein complex responsible for the synthesis of proteins in the cell. The small ribosomal subunit (SSU) binds messenger RNAs (mRNAs) and translates the encoded message by selecting cognate aminoacyl-transfer RNA (tRNA) molecules. The large subunit (LSU) contains the ribosomal catalytic site termed the peptidyl transferase center (PTC), which catalyzes the formation of peptide bonds, thereby polymerizing the amino acids delivered by tRNAs into a polypeptide chain. The nascent polypeptides leave the ribosome through a tunnel in the LSU and interact with protein factors that function in enzymatic processing, targeting, and the membrane insertion of nascent chains at the exit of the ribosomal tunnel.</text>
</comment>
<comment type="subunit">
    <text evidence="1">Component of the large ribosomal subunit (LSU). Mature yeast ribosomes consist of a small (40S) and a large (60S) subunit. The 40S small subunit contains 1 molecule of ribosomal RNA (18S rRNA) and 33 different proteins (encoded by 57 genes). The large 60S subunit contains 3 rRNA molecules (25S, 5.8S and 5S rRNA) and 46 different proteins (encoded by 81 genes) (By similarity). Component of a hexameric 5S RNP precursor complex, composed of 5S RNA, rrs1, rpf2, rpl5a/rpl5b, rpl11a/rpl11b and syo1; this complex acts as a precursor for ribosome assembly (By similarity). rpl5a/rpl5b/uL18 forms a heterotrimeric complex with syo1 and rpl11a/rpl11b/uL5. Interaction of this complex with KAP104 allows the nuclear import of the heterotrimer (By similarity).</text>
</comment>
<comment type="subcellular location">
    <subcellularLocation>
        <location evidence="1">Cytoplasm</location>
    </subcellularLocation>
    <subcellularLocation>
        <location evidence="1">Nucleus</location>
    </subcellularLocation>
</comment>
<comment type="miscellaneous">
    <text>There are 2 genes for uL18 in S.pombe.</text>
</comment>
<comment type="similarity">
    <text evidence="3">Belongs to the universal ribosomal protein uL18 family.</text>
</comment>
<organism>
    <name type="scientific">Schizosaccharomyces pombe (strain 972 / ATCC 24843)</name>
    <name type="common">Fission yeast</name>
    <dbReference type="NCBI Taxonomy" id="284812"/>
    <lineage>
        <taxon>Eukaryota</taxon>
        <taxon>Fungi</taxon>
        <taxon>Dikarya</taxon>
        <taxon>Ascomycota</taxon>
        <taxon>Taphrinomycotina</taxon>
        <taxon>Schizosaccharomycetes</taxon>
        <taxon>Schizosaccharomycetales</taxon>
        <taxon>Schizosaccharomycetaceae</taxon>
        <taxon>Schizosaccharomyces</taxon>
    </lineage>
</organism>
<sequence>MPFIKAVKSSPYFSRYQTKYRRRREGKTDYYARKRLIAQAKNKYNAPKYRLVVRFSNRFVTCQIVSSRVNGDYVLAHAHSSELPRYGIKWGLANWTAAYATGLLVARRALAKVGLADKYEGVTEPEGEFELTEAIEDGPRPFKVFLDVGLKRTSTGSRVFGAMKGASDGGLFIPHSPNRFPGFDIETEELDDETLRKYIYGGHVAEYMEMLIDDDEERYQKQFSGLIADGIESDQLEDIYAEAYAKIREDPSFQKSGKDAAAFKAESLKHTQRKLTAEERKERFNAKVIEAGRA</sequence>